<accession>P72299</accession>
<sequence>MYEVDMTIVGGGLVGASIAWGLARSGINPLVLDGDDLDLRASRANFGLVWVQGKGLHAPHYALWSDASAKVWPTMTKALSDDSGIDVGLRQAGAYTFALSEEELEAVREDMESIALETNGRAPHFDVLNRQQTLERVPGLGPDVVGSIYCSADGHANALALFHALHTAMQKKGAAYRSNHRVQTIEPTTEGFILKGHGFSVISRRVVLAAGLENERLAPMVGLSCPLKCSKGQILVTEKSQTALPCLSAGMRQADEGGIMIGDSEETDSAKISSSSGISAVLASRALKIFPALSDLNVLRSWTGFRVKTADGIPIYDQSERYPGAFLFACHSGVTLAANHALIVAPQIASGKLEDDLSVFSARRFDAQQAE</sequence>
<comment type="function">
    <text evidence="1">Oxidative cleavage of octopine into L-arginine and pyruvate.</text>
</comment>
<comment type="pathway">
    <text>Opine metabolism; octopine degradation.</text>
</comment>
<comment type="subunit">
    <text>Heterodimer of a subunit A and a subunit B.</text>
</comment>
<evidence type="ECO:0000250" key="1"/>
<feature type="chain" id="PRO_0000058054" description="Opine oxidase subunit B">
    <location>
        <begin position="1"/>
        <end position="371"/>
    </location>
</feature>
<protein>
    <recommendedName>
        <fullName>Opine oxidase subunit B</fullName>
        <ecNumber>1.-.-.-</ecNumber>
    </recommendedName>
    <alternativeName>
        <fullName>Octopine oxidase subunit B</fullName>
    </alternativeName>
</protein>
<name>OOXB_RHIML</name>
<gene>
    <name type="primary">ooxB</name>
</gene>
<reference key="1">
    <citation type="submission" date="1996-08" db="EMBL/GenBank/DDBJ databases">
        <title>The octopine catabolism operon of Rhizobium meliloti A3.</title>
        <authorList>
            <person name="Au S."/>
            <person name="Bergeron J."/>
            <person name="Dion P."/>
        </authorList>
    </citation>
    <scope>NUCLEOTIDE SEQUENCE [GENOMIC DNA]</scope>
    <source>
        <strain>A3</strain>
    </source>
</reference>
<dbReference type="EC" id="1.-.-.-"/>
<dbReference type="EMBL" id="U66830">
    <property type="protein sequence ID" value="AAB07522.1"/>
    <property type="molecule type" value="Genomic_DNA"/>
</dbReference>
<dbReference type="SMR" id="P72299"/>
<dbReference type="UniPathway" id="UPA00737"/>
<dbReference type="GO" id="GO:0005737">
    <property type="term" value="C:cytoplasm"/>
    <property type="evidence" value="ECO:0007669"/>
    <property type="project" value="TreeGrafter"/>
</dbReference>
<dbReference type="GO" id="GO:0016491">
    <property type="term" value="F:oxidoreductase activity"/>
    <property type="evidence" value="ECO:0007669"/>
    <property type="project" value="UniProtKB-KW"/>
</dbReference>
<dbReference type="Gene3D" id="3.30.9.10">
    <property type="entry name" value="D-Amino Acid Oxidase, subunit A, domain 2"/>
    <property type="match status" value="1"/>
</dbReference>
<dbReference type="Gene3D" id="3.50.50.60">
    <property type="entry name" value="FAD/NAD(P)-binding domain"/>
    <property type="match status" value="1"/>
</dbReference>
<dbReference type="InterPro" id="IPR006076">
    <property type="entry name" value="FAD-dep_OxRdtase"/>
</dbReference>
<dbReference type="InterPro" id="IPR036188">
    <property type="entry name" value="FAD/NAD-bd_sf"/>
</dbReference>
<dbReference type="PANTHER" id="PTHR13847">
    <property type="entry name" value="SARCOSINE DEHYDROGENASE-RELATED"/>
    <property type="match status" value="1"/>
</dbReference>
<dbReference type="Pfam" id="PF01266">
    <property type="entry name" value="DAO"/>
    <property type="match status" value="1"/>
</dbReference>
<dbReference type="SUPFAM" id="SSF54373">
    <property type="entry name" value="FAD-linked reductases, C-terminal domain"/>
    <property type="match status" value="1"/>
</dbReference>
<dbReference type="SUPFAM" id="SSF51905">
    <property type="entry name" value="FAD/NAD(P)-binding domain"/>
    <property type="match status" value="1"/>
</dbReference>
<organism>
    <name type="scientific">Rhizobium meliloti</name>
    <name type="common">Ensifer meliloti</name>
    <name type="synonym">Sinorhizobium meliloti</name>
    <dbReference type="NCBI Taxonomy" id="382"/>
    <lineage>
        <taxon>Bacteria</taxon>
        <taxon>Pseudomonadati</taxon>
        <taxon>Pseudomonadota</taxon>
        <taxon>Alphaproteobacteria</taxon>
        <taxon>Hyphomicrobiales</taxon>
        <taxon>Rhizobiaceae</taxon>
        <taxon>Sinorhizobium/Ensifer group</taxon>
        <taxon>Sinorhizobium</taxon>
    </lineage>
</organism>
<proteinExistence type="inferred from homology"/>
<keyword id="KW-0560">Oxidoreductase</keyword>